<name>NDK_SHESA</name>
<keyword id="KW-0067">ATP-binding</keyword>
<keyword id="KW-0963">Cytoplasm</keyword>
<keyword id="KW-0418">Kinase</keyword>
<keyword id="KW-0460">Magnesium</keyword>
<keyword id="KW-0479">Metal-binding</keyword>
<keyword id="KW-0546">Nucleotide metabolism</keyword>
<keyword id="KW-0547">Nucleotide-binding</keyword>
<keyword id="KW-0597">Phosphoprotein</keyword>
<keyword id="KW-0808">Transferase</keyword>
<sequence length="143" mass="15468">MAIERTFSIIKPDAVAKNHIGAIYNRFETAGLKIVAAKMLHLTKEQAEGFYAEHSERGFFGALVAFMTSGPIMVQVLEGENAVLAHREILGATNPAQAAPGTIRADFAESIDENAAHGSDALESAAREIAYFFSAEELCPRTR</sequence>
<evidence type="ECO:0000255" key="1">
    <source>
        <dbReference type="HAMAP-Rule" id="MF_00451"/>
    </source>
</evidence>
<comment type="function">
    <text evidence="1">Major role in the synthesis of nucleoside triphosphates other than ATP. The ATP gamma phosphate is transferred to the NDP beta phosphate via a ping-pong mechanism, using a phosphorylated active-site intermediate.</text>
</comment>
<comment type="catalytic activity">
    <reaction evidence="1">
        <text>a 2'-deoxyribonucleoside 5'-diphosphate + ATP = a 2'-deoxyribonucleoside 5'-triphosphate + ADP</text>
        <dbReference type="Rhea" id="RHEA:44640"/>
        <dbReference type="ChEBI" id="CHEBI:30616"/>
        <dbReference type="ChEBI" id="CHEBI:61560"/>
        <dbReference type="ChEBI" id="CHEBI:73316"/>
        <dbReference type="ChEBI" id="CHEBI:456216"/>
        <dbReference type="EC" id="2.7.4.6"/>
    </reaction>
</comment>
<comment type="catalytic activity">
    <reaction evidence="1">
        <text>a ribonucleoside 5'-diphosphate + ATP = a ribonucleoside 5'-triphosphate + ADP</text>
        <dbReference type="Rhea" id="RHEA:18113"/>
        <dbReference type="ChEBI" id="CHEBI:30616"/>
        <dbReference type="ChEBI" id="CHEBI:57930"/>
        <dbReference type="ChEBI" id="CHEBI:61557"/>
        <dbReference type="ChEBI" id="CHEBI:456216"/>
        <dbReference type="EC" id="2.7.4.6"/>
    </reaction>
</comment>
<comment type="cofactor">
    <cofactor evidence="1">
        <name>Mg(2+)</name>
        <dbReference type="ChEBI" id="CHEBI:18420"/>
    </cofactor>
</comment>
<comment type="subunit">
    <text evidence="1">Homotetramer.</text>
</comment>
<comment type="subcellular location">
    <subcellularLocation>
        <location evidence="1">Cytoplasm</location>
    </subcellularLocation>
</comment>
<comment type="similarity">
    <text evidence="1">Belongs to the NDK family.</text>
</comment>
<gene>
    <name evidence="1" type="primary">ndk</name>
    <name type="ordered locus">Shewana3_2272</name>
</gene>
<proteinExistence type="inferred from homology"/>
<feature type="chain" id="PRO_1000026296" description="Nucleoside diphosphate kinase">
    <location>
        <begin position="1"/>
        <end position="143"/>
    </location>
</feature>
<feature type="active site" description="Pros-phosphohistidine intermediate" evidence="1">
    <location>
        <position position="117"/>
    </location>
</feature>
<feature type="binding site" evidence="1">
    <location>
        <position position="11"/>
    </location>
    <ligand>
        <name>ATP</name>
        <dbReference type="ChEBI" id="CHEBI:30616"/>
    </ligand>
</feature>
<feature type="binding site" evidence="1">
    <location>
        <position position="59"/>
    </location>
    <ligand>
        <name>ATP</name>
        <dbReference type="ChEBI" id="CHEBI:30616"/>
    </ligand>
</feature>
<feature type="binding site" evidence="1">
    <location>
        <position position="87"/>
    </location>
    <ligand>
        <name>ATP</name>
        <dbReference type="ChEBI" id="CHEBI:30616"/>
    </ligand>
</feature>
<feature type="binding site" evidence="1">
    <location>
        <position position="93"/>
    </location>
    <ligand>
        <name>ATP</name>
        <dbReference type="ChEBI" id="CHEBI:30616"/>
    </ligand>
</feature>
<feature type="binding site" evidence="1">
    <location>
        <position position="104"/>
    </location>
    <ligand>
        <name>ATP</name>
        <dbReference type="ChEBI" id="CHEBI:30616"/>
    </ligand>
</feature>
<feature type="binding site" evidence="1">
    <location>
        <position position="114"/>
    </location>
    <ligand>
        <name>ATP</name>
        <dbReference type="ChEBI" id="CHEBI:30616"/>
    </ligand>
</feature>
<organism>
    <name type="scientific">Shewanella sp. (strain ANA-3)</name>
    <dbReference type="NCBI Taxonomy" id="94122"/>
    <lineage>
        <taxon>Bacteria</taxon>
        <taxon>Pseudomonadati</taxon>
        <taxon>Pseudomonadota</taxon>
        <taxon>Gammaproteobacteria</taxon>
        <taxon>Alteromonadales</taxon>
        <taxon>Shewanellaceae</taxon>
        <taxon>Shewanella</taxon>
    </lineage>
</organism>
<dbReference type="EC" id="2.7.4.6" evidence="1"/>
<dbReference type="EMBL" id="CP000469">
    <property type="protein sequence ID" value="ABK48501.1"/>
    <property type="molecule type" value="Genomic_DNA"/>
</dbReference>
<dbReference type="RefSeq" id="WP_011717218.1">
    <property type="nucleotide sequence ID" value="NC_008577.1"/>
</dbReference>
<dbReference type="SMR" id="A0KXI2"/>
<dbReference type="STRING" id="94122.Shewana3_2272"/>
<dbReference type="GeneID" id="94728190"/>
<dbReference type="KEGG" id="shn:Shewana3_2272"/>
<dbReference type="eggNOG" id="COG0105">
    <property type="taxonomic scope" value="Bacteria"/>
</dbReference>
<dbReference type="HOGENOM" id="CLU_060216_8_1_6"/>
<dbReference type="OrthoDB" id="9801161at2"/>
<dbReference type="Proteomes" id="UP000002589">
    <property type="component" value="Chromosome"/>
</dbReference>
<dbReference type="GO" id="GO:0005737">
    <property type="term" value="C:cytoplasm"/>
    <property type="evidence" value="ECO:0007669"/>
    <property type="project" value="UniProtKB-SubCell"/>
</dbReference>
<dbReference type="GO" id="GO:0005524">
    <property type="term" value="F:ATP binding"/>
    <property type="evidence" value="ECO:0007669"/>
    <property type="project" value="UniProtKB-UniRule"/>
</dbReference>
<dbReference type="GO" id="GO:0046872">
    <property type="term" value="F:metal ion binding"/>
    <property type="evidence" value="ECO:0007669"/>
    <property type="project" value="UniProtKB-KW"/>
</dbReference>
<dbReference type="GO" id="GO:0004550">
    <property type="term" value="F:nucleoside diphosphate kinase activity"/>
    <property type="evidence" value="ECO:0007669"/>
    <property type="project" value="UniProtKB-UniRule"/>
</dbReference>
<dbReference type="GO" id="GO:0006241">
    <property type="term" value="P:CTP biosynthetic process"/>
    <property type="evidence" value="ECO:0007669"/>
    <property type="project" value="UniProtKB-UniRule"/>
</dbReference>
<dbReference type="GO" id="GO:0006183">
    <property type="term" value="P:GTP biosynthetic process"/>
    <property type="evidence" value="ECO:0007669"/>
    <property type="project" value="UniProtKB-UniRule"/>
</dbReference>
<dbReference type="GO" id="GO:0006228">
    <property type="term" value="P:UTP biosynthetic process"/>
    <property type="evidence" value="ECO:0007669"/>
    <property type="project" value="UniProtKB-UniRule"/>
</dbReference>
<dbReference type="CDD" id="cd04413">
    <property type="entry name" value="NDPk_I"/>
    <property type="match status" value="1"/>
</dbReference>
<dbReference type="FunFam" id="3.30.70.141:FF:000001">
    <property type="entry name" value="Nucleoside diphosphate kinase"/>
    <property type="match status" value="1"/>
</dbReference>
<dbReference type="Gene3D" id="3.30.70.141">
    <property type="entry name" value="Nucleoside diphosphate kinase-like domain"/>
    <property type="match status" value="1"/>
</dbReference>
<dbReference type="HAMAP" id="MF_00451">
    <property type="entry name" value="NDP_kinase"/>
    <property type="match status" value="1"/>
</dbReference>
<dbReference type="InterPro" id="IPR034907">
    <property type="entry name" value="NDK-like_dom"/>
</dbReference>
<dbReference type="InterPro" id="IPR036850">
    <property type="entry name" value="NDK-like_dom_sf"/>
</dbReference>
<dbReference type="InterPro" id="IPR001564">
    <property type="entry name" value="Nucleoside_diP_kinase"/>
</dbReference>
<dbReference type="InterPro" id="IPR023005">
    <property type="entry name" value="Nucleoside_diP_kinase_AS"/>
</dbReference>
<dbReference type="NCBIfam" id="NF001908">
    <property type="entry name" value="PRK00668.1"/>
    <property type="match status" value="1"/>
</dbReference>
<dbReference type="PANTHER" id="PTHR46161">
    <property type="entry name" value="NUCLEOSIDE DIPHOSPHATE KINASE"/>
    <property type="match status" value="1"/>
</dbReference>
<dbReference type="PANTHER" id="PTHR46161:SF3">
    <property type="entry name" value="NUCLEOSIDE DIPHOSPHATE KINASE DDB_G0292928-RELATED"/>
    <property type="match status" value="1"/>
</dbReference>
<dbReference type="Pfam" id="PF00334">
    <property type="entry name" value="NDK"/>
    <property type="match status" value="1"/>
</dbReference>
<dbReference type="PRINTS" id="PR01243">
    <property type="entry name" value="NUCDPKINASE"/>
</dbReference>
<dbReference type="SMART" id="SM00562">
    <property type="entry name" value="NDK"/>
    <property type="match status" value="1"/>
</dbReference>
<dbReference type="SUPFAM" id="SSF54919">
    <property type="entry name" value="Nucleoside diphosphate kinase, NDK"/>
    <property type="match status" value="1"/>
</dbReference>
<dbReference type="PROSITE" id="PS00469">
    <property type="entry name" value="NDPK"/>
    <property type="match status" value="1"/>
</dbReference>
<dbReference type="PROSITE" id="PS51374">
    <property type="entry name" value="NDPK_LIKE"/>
    <property type="match status" value="1"/>
</dbReference>
<protein>
    <recommendedName>
        <fullName evidence="1">Nucleoside diphosphate kinase</fullName>
        <shortName evidence="1">NDK</shortName>
        <shortName evidence="1">NDP kinase</shortName>
        <ecNumber evidence="1">2.7.4.6</ecNumber>
    </recommendedName>
    <alternativeName>
        <fullName evidence="1">Nucleoside-2-P kinase</fullName>
    </alternativeName>
</protein>
<reference key="1">
    <citation type="submission" date="2006-09" db="EMBL/GenBank/DDBJ databases">
        <title>Complete sequence of chromosome 1 of Shewanella sp. ANA-3.</title>
        <authorList>
            <person name="Copeland A."/>
            <person name="Lucas S."/>
            <person name="Lapidus A."/>
            <person name="Barry K."/>
            <person name="Detter J.C."/>
            <person name="Glavina del Rio T."/>
            <person name="Hammon N."/>
            <person name="Israni S."/>
            <person name="Dalin E."/>
            <person name="Tice H."/>
            <person name="Pitluck S."/>
            <person name="Chertkov O."/>
            <person name="Brettin T."/>
            <person name="Bruce D."/>
            <person name="Han C."/>
            <person name="Tapia R."/>
            <person name="Gilna P."/>
            <person name="Schmutz J."/>
            <person name="Larimer F."/>
            <person name="Land M."/>
            <person name="Hauser L."/>
            <person name="Kyrpides N."/>
            <person name="Kim E."/>
            <person name="Newman D."/>
            <person name="Salticov C."/>
            <person name="Konstantinidis K."/>
            <person name="Klappenback J."/>
            <person name="Tiedje J."/>
            <person name="Richardson P."/>
        </authorList>
    </citation>
    <scope>NUCLEOTIDE SEQUENCE [LARGE SCALE GENOMIC DNA]</scope>
    <source>
        <strain>ANA-3</strain>
    </source>
</reference>
<accession>A0KXI2</accession>